<keyword id="KW-0028">Amino-acid biosynthesis</keyword>
<keyword id="KW-0055">Arginine biosynthesis</keyword>
<keyword id="KW-0067">ATP-binding</keyword>
<keyword id="KW-0963">Cytoplasm</keyword>
<keyword id="KW-0418">Kinase</keyword>
<keyword id="KW-0547">Nucleotide-binding</keyword>
<keyword id="KW-0808">Transferase</keyword>
<protein>
    <recommendedName>
        <fullName evidence="1">Acetylglutamate kinase</fullName>
        <ecNumber evidence="1">2.7.2.8</ecNumber>
    </recommendedName>
    <alternativeName>
        <fullName evidence="1">N-acetyl-L-glutamate 5-phosphotransferase</fullName>
    </alternativeName>
    <alternativeName>
        <fullName evidence="1">NAG kinase</fullName>
        <shortName evidence="1">NAGK</shortName>
    </alternativeName>
</protein>
<proteinExistence type="inferred from homology"/>
<comment type="function">
    <text evidence="1">Catalyzes the ATP-dependent phosphorylation of N-acetyl-L-glutamate.</text>
</comment>
<comment type="catalytic activity">
    <reaction evidence="1">
        <text>N-acetyl-L-glutamate + ATP = N-acetyl-L-glutamyl 5-phosphate + ADP</text>
        <dbReference type="Rhea" id="RHEA:14629"/>
        <dbReference type="ChEBI" id="CHEBI:30616"/>
        <dbReference type="ChEBI" id="CHEBI:44337"/>
        <dbReference type="ChEBI" id="CHEBI:57936"/>
        <dbReference type="ChEBI" id="CHEBI:456216"/>
        <dbReference type="EC" id="2.7.2.8"/>
    </reaction>
</comment>
<comment type="pathway">
    <text evidence="1">Amino-acid biosynthesis; L-arginine biosynthesis; N(2)-acetyl-L-ornithine from L-glutamate: step 2/4.</text>
</comment>
<comment type="subcellular location">
    <subcellularLocation>
        <location evidence="1">Cytoplasm</location>
    </subcellularLocation>
</comment>
<comment type="similarity">
    <text evidence="1">Belongs to the acetylglutamate kinase family. ArgB subfamily.</text>
</comment>
<sequence>MYNLYCTYMTGKRENVLIEALPYIREFHDSVMVIKVGGHAMVDPQVMSDIVQDIVLLRFVGIHPVIVHGGGPEITEKMDRMGKKSEFIGGLRITDDETMEIARMVLVGNINTRIVSLISKHGGKGVGLSGKDGNMILAKKKPTQKILIEDIEHDVDLGWVGDTEIINPEIINIVTANGYIPVISPIAMDSEGNALNINADTVAGDLADALNAKKLILMTDVPGVLRDQTDISTRISRIGVDEVEQLIEDGVLSGGMIPKMRSAKASVEGGVDRVHVIDGSISHSVLLELFTDQGIGTMVYKDTK</sequence>
<feature type="chain" id="PRO_0000264788" description="Acetylglutamate kinase">
    <location>
        <begin position="1"/>
        <end position="304"/>
    </location>
</feature>
<feature type="binding site" evidence="1">
    <location>
        <begin position="70"/>
        <end position="71"/>
    </location>
    <ligand>
        <name>substrate</name>
    </ligand>
</feature>
<feature type="binding site" evidence="1">
    <location>
        <position position="92"/>
    </location>
    <ligand>
        <name>substrate</name>
    </ligand>
</feature>
<feature type="binding site" evidence="1">
    <location>
        <position position="196"/>
    </location>
    <ligand>
        <name>substrate</name>
    </ligand>
</feature>
<feature type="site" description="Transition state stabilizer" evidence="1">
    <location>
        <position position="35"/>
    </location>
</feature>
<feature type="site" description="Transition state stabilizer" evidence="1">
    <location>
        <position position="259"/>
    </location>
</feature>
<accession>Q12ZP8</accession>
<organism>
    <name type="scientific">Methanococcoides burtonii (strain DSM 6242 / NBRC 107633 / OCM 468 / ACE-M)</name>
    <dbReference type="NCBI Taxonomy" id="259564"/>
    <lineage>
        <taxon>Archaea</taxon>
        <taxon>Methanobacteriati</taxon>
        <taxon>Methanobacteriota</taxon>
        <taxon>Stenosarchaea group</taxon>
        <taxon>Methanomicrobia</taxon>
        <taxon>Methanosarcinales</taxon>
        <taxon>Methanosarcinaceae</taxon>
        <taxon>Methanococcoides</taxon>
    </lineage>
</organism>
<gene>
    <name evidence="1" type="primary">argB</name>
    <name type="ordered locus">Mbur_0056</name>
</gene>
<evidence type="ECO:0000255" key="1">
    <source>
        <dbReference type="HAMAP-Rule" id="MF_00082"/>
    </source>
</evidence>
<name>ARGB_METBU</name>
<reference key="1">
    <citation type="journal article" date="2009" name="ISME J.">
        <title>The genome sequence of the psychrophilic archaeon, Methanococcoides burtonii: the role of genome evolution in cold adaptation.</title>
        <authorList>
            <person name="Allen M.A."/>
            <person name="Lauro F.M."/>
            <person name="Williams T.J."/>
            <person name="Burg D."/>
            <person name="Siddiqui K.S."/>
            <person name="De Francisci D."/>
            <person name="Chong K.W."/>
            <person name="Pilak O."/>
            <person name="Chew H.H."/>
            <person name="De Maere M.Z."/>
            <person name="Ting L."/>
            <person name="Katrib M."/>
            <person name="Ng C."/>
            <person name="Sowers K.R."/>
            <person name="Galperin M.Y."/>
            <person name="Anderson I.J."/>
            <person name="Ivanova N."/>
            <person name="Dalin E."/>
            <person name="Martinez M."/>
            <person name="Lapidus A."/>
            <person name="Hauser L."/>
            <person name="Land M."/>
            <person name="Thomas T."/>
            <person name="Cavicchioli R."/>
        </authorList>
    </citation>
    <scope>NUCLEOTIDE SEQUENCE [LARGE SCALE GENOMIC DNA]</scope>
    <source>
        <strain>DSM 6242 / NBRC 107633 / OCM 468 / ACE-M</strain>
    </source>
</reference>
<dbReference type="EC" id="2.7.2.8" evidence="1"/>
<dbReference type="EMBL" id="CP000300">
    <property type="protein sequence ID" value="ABE51078.1"/>
    <property type="molecule type" value="Genomic_DNA"/>
</dbReference>
<dbReference type="SMR" id="Q12ZP8"/>
<dbReference type="STRING" id="259564.Mbur_0056"/>
<dbReference type="KEGG" id="mbu:Mbur_0056"/>
<dbReference type="HOGENOM" id="CLU_053680_0_0_2"/>
<dbReference type="UniPathway" id="UPA00068">
    <property type="reaction ID" value="UER00107"/>
</dbReference>
<dbReference type="Proteomes" id="UP000001979">
    <property type="component" value="Chromosome"/>
</dbReference>
<dbReference type="GO" id="GO:0005737">
    <property type="term" value="C:cytoplasm"/>
    <property type="evidence" value="ECO:0007669"/>
    <property type="project" value="UniProtKB-SubCell"/>
</dbReference>
<dbReference type="GO" id="GO:0003991">
    <property type="term" value="F:acetylglutamate kinase activity"/>
    <property type="evidence" value="ECO:0007669"/>
    <property type="project" value="UniProtKB-UniRule"/>
</dbReference>
<dbReference type="GO" id="GO:0005524">
    <property type="term" value="F:ATP binding"/>
    <property type="evidence" value="ECO:0007669"/>
    <property type="project" value="UniProtKB-UniRule"/>
</dbReference>
<dbReference type="GO" id="GO:0042450">
    <property type="term" value="P:arginine biosynthetic process via ornithine"/>
    <property type="evidence" value="ECO:0007669"/>
    <property type="project" value="UniProtKB-UniRule"/>
</dbReference>
<dbReference type="GO" id="GO:0006526">
    <property type="term" value="P:L-arginine biosynthetic process"/>
    <property type="evidence" value="ECO:0007669"/>
    <property type="project" value="UniProtKB-UniPathway"/>
</dbReference>
<dbReference type="CDD" id="cd04250">
    <property type="entry name" value="AAK_NAGK-C"/>
    <property type="match status" value="1"/>
</dbReference>
<dbReference type="FunFam" id="3.40.1160.10:FF:000004">
    <property type="entry name" value="Acetylglutamate kinase"/>
    <property type="match status" value="1"/>
</dbReference>
<dbReference type="Gene3D" id="3.40.1160.10">
    <property type="entry name" value="Acetylglutamate kinase-like"/>
    <property type="match status" value="1"/>
</dbReference>
<dbReference type="HAMAP" id="MF_00082">
    <property type="entry name" value="ArgB"/>
    <property type="match status" value="1"/>
</dbReference>
<dbReference type="InterPro" id="IPR036393">
    <property type="entry name" value="AceGlu_kinase-like_sf"/>
</dbReference>
<dbReference type="InterPro" id="IPR004662">
    <property type="entry name" value="AcgluKinase_fam"/>
</dbReference>
<dbReference type="InterPro" id="IPR037528">
    <property type="entry name" value="ArgB"/>
</dbReference>
<dbReference type="InterPro" id="IPR001048">
    <property type="entry name" value="Asp/Glu/Uridylate_kinase"/>
</dbReference>
<dbReference type="InterPro" id="IPR001057">
    <property type="entry name" value="Glu/AcGlu_kinase"/>
</dbReference>
<dbReference type="InterPro" id="IPR041727">
    <property type="entry name" value="NAGK-C"/>
</dbReference>
<dbReference type="NCBIfam" id="TIGR00761">
    <property type="entry name" value="argB"/>
    <property type="match status" value="1"/>
</dbReference>
<dbReference type="PANTHER" id="PTHR23342">
    <property type="entry name" value="N-ACETYLGLUTAMATE SYNTHASE"/>
    <property type="match status" value="1"/>
</dbReference>
<dbReference type="PANTHER" id="PTHR23342:SF0">
    <property type="entry name" value="N-ACETYLGLUTAMATE SYNTHASE, MITOCHONDRIAL"/>
    <property type="match status" value="1"/>
</dbReference>
<dbReference type="Pfam" id="PF00696">
    <property type="entry name" value="AA_kinase"/>
    <property type="match status" value="1"/>
</dbReference>
<dbReference type="PIRSF" id="PIRSF000728">
    <property type="entry name" value="NAGK"/>
    <property type="match status" value="1"/>
</dbReference>
<dbReference type="PRINTS" id="PR00474">
    <property type="entry name" value="GLU5KINASE"/>
</dbReference>
<dbReference type="SUPFAM" id="SSF53633">
    <property type="entry name" value="Carbamate kinase-like"/>
    <property type="match status" value="1"/>
</dbReference>